<sequence length="218" mass="23159">MSENEIKGILGTKLGMTQIFDEENRVIPVTVVEAGPCVVSQIRTVETDGYNAIQIAYGEIDPRKVNQPLTGHFKKAGVTPRRHVTEIRMDDVSGYEVGQDVTVEIFNDIKFVDVTGTTKGKGYAGAMKRHGFAGQGAGHGNQAAHRRVGGIGAAATPGRIFKGKRMAGRMGNDRVTTQNLKVQKIDADANIILIKGAIPGNRGGIVTVKTAVKGGAHA</sequence>
<keyword id="KW-0687">Ribonucleoprotein</keyword>
<keyword id="KW-0689">Ribosomal protein</keyword>
<keyword id="KW-0694">RNA-binding</keyword>
<keyword id="KW-0699">rRNA-binding</keyword>
<reference key="1">
    <citation type="journal article" date="2007" name="Microbiology">
        <title>Comparative analysis of the Corynebacterium glutamicum group and complete genome sequence of strain R.</title>
        <authorList>
            <person name="Yukawa H."/>
            <person name="Omumasaba C.A."/>
            <person name="Nonaka H."/>
            <person name="Kos P."/>
            <person name="Okai N."/>
            <person name="Suzuki N."/>
            <person name="Suda M."/>
            <person name="Tsuge Y."/>
            <person name="Watanabe J."/>
            <person name="Ikeda Y."/>
            <person name="Vertes A.A."/>
            <person name="Inui M."/>
        </authorList>
    </citation>
    <scope>NUCLEOTIDE SEQUENCE [LARGE SCALE GENOMIC DNA]</scope>
    <source>
        <strain>R</strain>
    </source>
</reference>
<feature type="chain" id="PRO_1000052039" description="Large ribosomal subunit protein uL3">
    <location>
        <begin position="1"/>
        <end position="218"/>
    </location>
</feature>
<organism>
    <name type="scientific">Corynebacterium glutamicum (strain R)</name>
    <dbReference type="NCBI Taxonomy" id="340322"/>
    <lineage>
        <taxon>Bacteria</taxon>
        <taxon>Bacillati</taxon>
        <taxon>Actinomycetota</taxon>
        <taxon>Actinomycetes</taxon>
        <taxon>Mycobacteriales</taxon>
        <taxon>Corynebacteriaceae</taxon>
        <taxon>Corynebacterium</taxon>
    </lineage>
</organism>
<protein>
    <recommendedName>
        <fullName evidence="1">Large ribosomal subunit protein uL3</fullName>
    </recommendedName>
    <alternativeName>
        <fullName evidence="2">50S ribosomal protein L3</fullName>
    </alternativeName>
</protein>
<accession>A4QBH9</accession>
<comment type="function">
    <text evidence="1">One of the primary rRNA binding proteins, it binds directly near the 3'-end of the 23S rRNA, where it nucleates assembly of the 50S subunit.</text>
</comment>
<comment type="subunit">
    <text evidence="1">Part of the 50S ribosomal subunit. Forms a cluster with proteins L14 and L19.</text>
</comment>
<comment type="similarity">
    <text evidence="1">Belongs to the universal ribosomal protein uL3 family.</text>
</comment>
<gene>
    <name evidence="1" type="primary">rplC</name>
    <name type="ordered locus">cgR_0607</name>
</gene>
<proteinExistence type="inferred from homology"/>
<dbReference type="EMBL" id="AP009044">
    <property type="protein sequence ID" value="BAF53576.1"/>
    <property type="molecule type" value="Genomic_DNA"/>
</dbReference>
<dbReference type="RefSeq" id="WP_003854292.1">
    <property type="nucleotide sequence ID" value="NC_009342.1"/>
</dbReference>
<dbReference type="SMR" id="A4QBH9"/>
<dbReference type="GeneID" id="1021508"/>
<dbReference type="KEGG" id="cgt:cgR_0607"/>
<dbReference type="HOGENOM" id="CLU_044142_4_1_11"/>
<dbReference type="PhylomeDB" id="A4QBH9"/>
<dbReference type="Proteomes" id="UP000006698">
    <property type="component" value="Chromosome"/>
</dbReference>
<dbReference type="GO" id="GO:0022625">
    <property type="term" value="C:cytosolic large ribosomal subunit"/>
    <property type="evidence" value="ECO:0007669"/>
    <property type="project" value="TreeGrafter"/>
</dbReference>
<dbReference type="GO" id="GO:0019843">
    <property type="term" value="F:rRNA binding"/>
    <property type="evidence" value="ECO:0007669"/>
    <property type="project" value="UniProtKB-UniRule"/>
</dbReference>
<dbReference type="GO" id="GO:0003735">
    <property type="term" value="F:structural constituent of ribosome"/>
    <property type="evidence" value="ECO:0007669"/>
    <property type="project" value="InterPro"/>
</dbReference>
<dbReference type="GO" id="GO:0006412">
    <property type="term" value="P:translation"/>
    <property type="evidence" value="ECO:0007669"/>
    <property type="project" value="UniProtKB-UniRule"/>
</dbReference>
<dbReference type="FunFam" id="2.40.30.10:FF:000004">
    <property type="entry name" value="50S ribosomal protein L3"/>
    <property type="match status" value="1"/>
</dbReference>
<dbReference type="FunFam" id="3.30.160.810:FF:000001">
    <property type="entry name" value="50S ribosomal protein L3"/>
    <property type="match status" value="1"/>
</dbReference>
<dbReference type="Gene3D" id="3.30.160.810">
    <property type="match status" value="1"/>
</dbReference>
<dbReference type="Gene3D" id="2.40.30.10">
    <property type="entry name" value="Translation factors"/>
    <property type="match status" value="1"/>
</dbReference>
<dbReference type="HAMAP" id="MF_01325_B">
    <property type="entry name" value="Ribosomal_uL3_B"/>
    <property type="match status" value="1"/>
</dbReference>
<dbReference type="InterPro" id="IPR000597">
    <property type="entry name" value="Ribosomal_uL3"/>
</dbReference>
<dbReference type="InterPro" id="IPR019927">
    <property type="entry name" value="Ribosomal_uL3_bac/org-type"/>
</dbReference>
<dbReference type="InterPro" id="IPR019926">
    <property type="entry name" value="Ribosomal_uL3_CS"/>
</dbReference>
<dbReference type="InterPro" id="IPR009000">
    <property type="entry name" value="Transl_B-barrel_sf"/>
</dbReference>
<dbReference type="NCBIfam" id="TIGR03625">
    <property type="entry name" value="L3_bact"/>
    <property type="match status" value="1"/>
</dbReference>
<dbReference type="PANTHER" id="PTHR11229">
    <property type="entry name" value="50S RIBOSOMAL PROTEIN L3"/>
    <property type="match status" value="1"/>
</dbReference>
<dbReference type="PANTHER" id="PTHR11229:SF16">
    <property type="entry name" value="LARGE RIBOSOMAL SUBUNIT PROTEIN UL3C"/>
    <property type="match status" value="1"/>
</dbReference>
<dbReference type="Pfam" id="PF00297">
    <property type="entry name" value="Ribosomal_L3"/>
    <property type="match status" value="1"/>
</dbReference>
<dbReference type="SUPFAM" id="SSF50447">
    <property type="entry name" value="Translation proteins"/>
    <property type="match status" value="1"/>
</dbReference>
<dbReference type="PROSITE" id="PS00474">
    <property type="entry name" value="RIBOSOMAL_L3"/>
    <property type="match status" value="1"/>
</dbReference>
<evidence type="ECO:0000255" key="1">
    <source>
        <dbReference type="HAMAP-Rule" id="MF_01325"/>
    </source>
</evidence>
<evidence type="ECO:0000305" key="2"/>
<name>RL3_CORGB</name>